<organism>
    <name type="scientific">Lactobacillus gasseri (strain ATCC 33323 / DSM 20243 / BCRC 14619 / CIP 102991 / JCM 1131 / KCTC 3163 / NCIMB 11718 / NCTC 13722 / AM63)</name>
    <dbReference type="NCBI Taxonomy" id="324831"/>
    <lineage>
        <taxon>Bacteria</taxon>
        <taxon>Bacillati</taxon>
        <taxon>Bacillota</taxon>
        <taxon>Bacilli</taxon>
        <taxon>Lactobacillales</taxon>
        <taxon>Lactobacillaceae</taxon>
        <taxon>Lactobacillus</taxon>
    </lineage>
</organism>
<sequence length="117" mass="13681">MVNIYDNANQMAKDLQETEQFKDLKKSLENLKNKPESLDLYQRMDKLQQQILAAQNSGQPLSDDVKKEYQKINEEVRNNDELKDMITKEQALFQMINDVQQAMTKPIGDLYDDLKAK</sequence>
<evidence type="ECO:0000255" key="1">
    <source>
        <dbReference type="HAMAP-Rule" id="MF_01526"/>
    </source>
</evidence>
<protein>
    <recommendedName>
        <fullName evidence="1">UPF0342 protein LGAS_1451</fullName>
    </recommendedName>
</protein>
<comment type="similarity">
    <text evidence="1">Belongs to the UPF0342 family.</text>
</comment>
<gene>
    <name type="ordered locus">LGAS_1451</name>
</gene>
<dbReference type="EMBL" id="CP000413">
    <property type="protein sequence ID" value="ABJ60810.1"/>
    <property type="molecule type" value="Genomic_DNA"/>
</dbReference>
<dbReference type="RefSeq" id="WP_003646880.1">
    <property type="nucleotide sequence ID" value="NZ_WBMG01000003.1"/>
</dbReference>
<dbReference type="SMR" id="Q041R2"/>
<dbReference type="KEGG" id="lga:LGAS_1451"/>
<dbReference type="HOGENOM" id="CLU_140243_3_1_9"/>
<dbReference type="BioCyc" id="LGAS324831:G1G6Y-1443-MONOMER"/>
<dbReference type="Proteomes" id="UP000000664">
    <property type="component" value="Chromosome"/>
</dbReference>
<dbReference type="Gene3D" id="1.20.1500.10">
    <property type="entry name" value="YheA/YmcA-like"/>
    <property type="match status" value="1"/>
</dbReference>
<dbReference type="HAMAP" id="MF_01526">
    <property type="entry name" value="UPF0342"/>
    <property type="match status" value="1"/>
</dbReference>
<dbReference type="InterPro" id="IPR010368">
    <property type="entry name" value="Com_YlbF"/>
</dbReference>
<dbReference type="InterPro" id="IPR023378">
    <property type="entry name" value="YheA/YmcA-like_dom_sf"/>
</dbReference>
<dbReference type="Pfam" id="PF06133">
    <property type="entry name" value="Com_YlbF"/>
    <property type="match status" value="1"/>
</dbReference>
<dbReference type="SUPFAM" id="SSF158622">
    <property type="entry name" value="YheA/YmcA-like"/>
    <property type="match status" value="1"/>
</dbReference>
<proteinExistence type="inferred from homology"/>
<name>Y1451_LACGA</name>
<accession>Q041R2</accession>
<feature type="chain" id="PRO_0000292734" description="UPF0342 protein LGAS_1451">
    <location>
        <begin position="1"/>
        <end position="117"/>
    </location>
</feature>
<reference key="1">
    <citation type="journal article" date="2006" name="Proc. Natl. Acad. Sci. U.S.A.">
        <title>Comparative genomics of the lactic acid bacteria.</title>
        <authorList>
            <person name="Makarova K.S."/>
            <person name="Slesarev A."/>
            <person name="Wolf Y.I."/>
            <person name="Sorokin A."/>
            <person name="Mirkin B."/>
            <person name="Koonin E.V."/>
            <person name="Pavlov A."/>
            <person name="Pavlova N."/>
            <person name="Karamychev V."/>
            <person name="Polouchine N."/>
            <person name="Shakhova V."/>
            <person name="Grigoriev I."/>
            <person name="Lou Y."/>
            <person name="Rohksar D."/>
            <person name="Lucas S."/>
            <person name="Huang K."/>
            <person name="Goodstein D.M."/>
            <person name="Hawkins T."/>
            <person name="Plengvidhya V."/>
            <person name="Welker D."/>
            <person name="Hughes J."/>
            <person name="Goh Y."/>
            <person name="Benson A."/>
            <person name="Baldwin K."/>
            <person name="Lee J.-H."/>
            <person name="Diaz-Muniz I."/>
            <person name="Dosti B."/>
            <person name="Smeianov V."/>
            <person name="Wechter W."/>
            <person name="Barabote R."/>
            <person name="Lorca G."/>
            <person name="Altermann E."/>
            <person name="Barrangou R."/>
            <person name="Ganesan B."/>
            <person name="Xie Y."/>
            <person name="Rawsthorne H."/>
            <person name="Tamir D."/>
            <person name="Parker C."/>
            <person name="Breidt F."/>
            <person name="Broadbent J.R."/>
            <person name="Hutkins R."/>
            <person name="O'Sullivan D."/>
            <person name="Steele J."/>
            <person name="Unlu G."/>
            <person name="Saier M.H. Jr."/>
            <person name="Klaenhammer T."/>
            <person name="Richardson P."/>
            <person name="Kozyavkin S."/>
            <person name="Weimer B.C."/>
            <person name="Mills D.A."/>
        </authorList>
    </citation>
    <scope>NUCLEOTIDE SEQUENCE [LARGE SCALE GENOMIC DNA]</scope>
    <source>
        <strain>ATCC 33323 / DSM 20243 / BCRC 14619 / CIP 102991 / JCM 1131 / KCTC 3163 / NCIMB 11718 / NCTC 13722 / AM63</strain>
    </source>
</reference>